<sequence>MAQRISLTRYLVEQQRVDGLIPSQLRLLLEVVARACKHISHAVNKGALGGVLGSASSENVQGEIQKKLDIIANEVLIEANEWGGHLAAMASEEMDSIYVVPNRYPQGEYLLLFDPLDGSSNIDVNVSIGTIFSVLKKPEGHPGVTTEDFLQAGSSQVAAGYCIYGPQTTLVLTVGDGVAMFTLDREQGSFVLVEENVKIPADTREFAINMSNMRHWDAPVKRYIDECLAGTEGPREKDFNMRWIASMVADVHRILTRGGIFLYPWDKREPNKPGKLRLMYEANPMSWLIEQAGGAATNGKERILDIQPKQLHERVSVILGSKNEVERVTRYHSGI</sequence>
<comment type="catalytic activity">
    <reaction evidence="1">
        <text>beta-D-fructose 1,6-bisphosphate + H2O = beta-D-fructose 6-phosphate + phosphate</text>
        <dbReference type="Rhea" id="RHEA:11064"/>
        <dbReference type="ChEBI" id="CHEBI:15377"/>
        <dbReference type="ChEBI" id="CHEBI:32966"/>
        <dbReference type="ChEBI" id="CHEBI:43474"/>
        <dbReference type="ChEBI" id="CHEBI:57634"/>
        <dbReference type="EC" id="3.1.3.11"/>
    </reaction>
</comment>
<comment type="cofactor">
    <cofactor evidence="1">
        <name>Mg(2+)</name>
        <dbReference type="ChEBI" id="CHEBI:18420"/>
    </cofactor>
    <text evidence="1">Binds 2 magnesium ions per subunit.</text>
</comment>
<comment type="pathway">
    <text evidence="1">Carbohydrate biosynthesis; gluconeogenesis.</text>
</comment>
<comment type="subunit">
    <text evidence="1">Homotetramer.</text>
</comment>
<comment type="subcellular location">
    <subcellularLocation>
        <location evidence="1">Cytoplasm</location>
    </subcellularLocation>
</comment>
<comment type="similarity">
    <text evidence="1">Belongs to the FBPase class 1 family.</text>
</comment>
<organism>
    <name type="scientific">Paracidovorax citrulli (strain AAC00-1)</name>
    <name type="common">Acidovorax citrulli</name>
    <dbReference type="NCBI Taxonomy" id="397945"/>
    <lineage>
        <taxon>Bacteria</taxon>
        <taxon>Pseudomonadati</taxon>
        <taxon>Pseudomonadota</taxon>
        <taxon>Betaproteobacteria</taxon>
        <taxon>Burkholderiales</taxon>
        <taxon>Comamonadaceae</taxon>
        <taxon>Paracidovorax</taxon>
    </lineage>
</organism>
<dbReference type="EC" id="3.1.3.11" evidence="1"/>
<dbReference type="EMBL" id="CP000512">
    <property type="protein sequence ID" value="ABM32427.1"/>
    <property type="molecule type" value="Genomic_DNA"/>
</dbReference>
<dbReference type="RefSeq" id="WP_011794973.1">
    <property type="nucleotide sequence ID" value="NC_008752.1"/>
</dbReference>
<dbReference type="SMR" id="A1TN89"/>
<dbReference type="STRING" id="397945.Aave_1843"/>
<dbReference type="GeneID" id="79793147"/>
<dbReference type="KEGG" id="aav:Aave_1843"/>
<dbReference type="eggNOG" id="COG0158">
    <property type="taxonomic scope" value="Bacteria"/>
</dbReference>
<dbReference type="HOGENOM" id="CLU_039977_0_0_4"/>
<dbReference type="OrthoDB" id="9806756at2"/>
<dbReference type="UniPathway" id="UPA00138"/>
<dbReference type="Proteomes" id="UP000002596">
    <property type="component" value="Chromosome"/>
</dbReference>
<dbReference type="GO" id="GO:0005829">
    <property type="term" value="C:cytosol"/>
    <property type="evidence" value="ECO:0007669"/>
    <property type="project" value="TreeGrafter"/>
</dbReference>
<dbReference type="GO" id="GO:0042132">
    <property type="term" value="F:fructose 1,6-bisphosphate 1-phosphatase activity"/>
    <property type="evidence" value="ECO:0007669"/>
    <property type="project" value="UniProtKB-UniRule"/>
</dbReference>
<dbReference type="GO" id="GO:0000287">
    <property type="term" value="F:magnesium ion binding"/>
    <property type="evidence" value="ECO:0007669"/>
    <property type="project" value="UniProtKB-UniRule"/>
</dbReference>
<dbReference type="GO" id="GO:0030388">
    <property type="term" value="P:fructose 1,6-bisphosphate metabolic process"/>
    <property type="evidence" value="ECO:0007669"/>
    <property type="project" value="TreeGrafter"/>
</dbReference>
<dbReference type="GO" id="GO:0006002">
    <property type="term" value="P:fructose 6-phosphate metabolic process"/>
    <property type="evidence" value="ECO:0007669"/>
    <property type="project" value="TreeGrafter"/>
</dbReference>
<dbReference type="GO" id="GO:0006000">
    <property type="term" value="P:fructose metabolic process"/>
    <property type="evidence" value="ECO:0007669"/>
    <property type="project" value="TreeGrafter"/>
</dbReference>
<dbReference type="GO" id="GO:0006094">
    <property type="term" value="P:gluconeogenesis"/>
    <property type="evidence" value="ECO:0007669"/>
    <property type="project" value="UniProtKB-UniRule"/>
</dbReference>
<dbReference type="GO" id="GO:0005986">
    <property type="term" value="P:sucrose biosynthetic process"/>
    <property type="evidence" value="ECO:0007669"/>
    <property type="project" value="TreeGrafter"/>
</dbReference>
<dbReference type="CDD" id="cd00354">
    <property type="entry name" value="FBPase"/>
    <property type="match status" value="1"/>
</dbReference>
<dbReference type="FunFam" id="3.30.540.10:FF:000006">
    <property type="entry name" value="Fructose-1,6-bisphosphatase class 1"/>
    <property type="match status" value="1"/>
</dbReference>
<dbReference type="FunFam" id="3.40.190.80:FF:000011">
    <property type="entry name" value="Fructose-1,6-bisphosphatase class 1"/>
    <property type="match status" value="1"/>
</dbReference>
<dbReference type="Gene3D" id="3.40.190.80">
    <property type="match status" value="1"/>
</dbReference>
<dbReference type="Gene3D" id="3.30.540.10">
    <property type="entry name" value="Fructose-1,6-Bisphosphatase, subunit A, domain 1"/>
    <property type="match status" value="1"/>
</dbReference>
<dbReference type="HAMAP" id="MF_01855">
    <property type="entry name" value="FBPase_class1"/>
    <property type="match status" value="1"/>
</dbReference>
<dbReference type="InterPro" id="IPR044015">
    <property type="entry name" value="FBPase_C_dom"/>
</dbReference>
<dbReference type="InterPro" id="IPR000146">
    <property type="entry name" value="FBPase_class-1"/>
</dbReference>
<dbReference type="InterPro" id="IPR033391">
    <property type="entry name" value="FBPase_N"/>
</dbReference>
<dbReference type="InterPro" id="IPR028343">
    <property type="entry name" value="FBPtase"/>
</dbReference>
<dbReference type="NCBIfam" id="NF006778">
    <property type="entry name" value="PRK09293.1-1"/>
    <property type="match status" value="1"/>
</dbReference>
<dbReference type="NCBIfam" id="NF006779">
    <property type="entry name" value="PRK09293.1-3"/>
    <property type="match status" value="1"/>
</dbReference>
<dbReference type="NCBIfam" id="NF006780">
    <property type="entry name" value="PRK09293.1-4"/>
    <property type="match status" value="1"/>
</dbReference>
<dbReference type="PANTHER" id="PTHR11556">
    <property type="entry name" value="FRUCTOSE-1,6-BISPHOSPHATASE-RELATED"/>
    <property type="match status" value="1"/>
</dbReference>
<dbReference type="PANTHER" id="PTHR11556:SF35">
    <property type="entry name" value="SEDOHEPTULOSE-1,7-BISPHOSPHATASE, CHLOROPLASTIC"/>
    <property type="match status" value="1"/>
</dbReference>
<dbReference type="Pfam" id="PF00316">
    <property type="entry name" value="FBPase"/>
    <property type="match status" value="1"/>
</dbReference>
<dbReference type="Pfam" id="PF18913">
    <property type="entry name" value="FBPase_C"/>
    <property type="match status" value="1"/>
</dbReference>
<dbReference type="PIRSF" id="PIRSF500210">
    <property type="entry name" value="FBPtase"/>
    <property type="match status" value="1"/>
</dbReference>
<dbReference type="PIRSF" id="PIRSF000904">
    <property type="entry name" value="FBPtase_SBPase"/>
    <property type="match status" value="1"/>
</dbReference>
<dbReference type="PRINTS" id="PR00115">
    <property type="entry name" value="F16BPHPHTASE"/>
</dbReference>
<dbReference type="SUPFAM" id="SSF56655">
    <property type="entry name" value="Carbohydrate phosphatase"/>
    <property type="match status" value="1"/>
</dbReference>
<name>F16PA_PARC0</name>
<gene>
    <name evidence="1" type="primary">fbp</name>
    <name type="ordered locus">Aave_1843</name>
</gene>
<accession>A1TN89</accession>
<feature type="chain" id="PRO_0000364445" description="Fructose-1,6-bisphosphatase class 1">
    <location>
        <begin position="1"/>
        <end position="335"/>
    </location>
</feature>
<feature type="binding site" evidence="1">
    <location>
        <position position="92"/>
    </location>
    <ligand>
        <name>Mg(2+)</name>
        <dbReference type="ChEBI" id="CHEBI:18420"/>
        <label>1</label>
    </ligand>
</feature>
<feature type="binding site" evidence="1">
    <location>
        <position position="114"/>
    </location>
    <ligand>
        <name>Mg(2+)</name>
        <dbReference type="ChEBI" id="CHEBI:18420"/>
        <label>1</label>
    </ligand>
</feature>
<feature type="binding site" evidence="1">
    <location>
        <position position="114"/>
    </location>
    <ligand>
        <name>Mg(2+)</name>
        <dbReference type="ChEBI" id="CHEBI:18420"/>
        <label>2</label>
    </ligand>
</feature>
<feature type="binding site" evidence="1">
    <location>
        <position position="116"/>
    </location>
    <ligand>
        <name>Mg(2+)</name>
        <dbReference type="ChEBI" id="CHEBI:18420"/>
        <label>1</label>
    </ligand>
</feature>
<feature type="binding site" evidence="1">
    <location>
        <begin position="117"/>
        <end position="120"/>
    </location>
    <ligand>
        <name>substrate</name>
    </ligand>
</feature>
<feature type="binding site" evidence="1">
    <location>
        <position position="117"/>
    </location>
    <ligand>
        <name>Mg(2+)</name>
        <dbReference type="ChEBI" id="CHEBI:18420"/>
        <label>2</label>
    </ligand>
</feature>
<feature type="binding site" evidence="1">
    <location>
        <position position="209"/>
    </location>
    <ligand>
        <name>substrate</name>
    </ligand>
</feature>
<feature type="binding site" evidence="1">
    <location>
        <position position="275"/>
    </location>
    <ligand>
        <name>substrate</name>
    </ligand>
</feature>
<feature type="binding site" evidence="1">
    <location>
        <position position="281"/>
    </location>
    <ligand>
        <name>Mg(2+)</name>
        <dbReference type="ChEBI" id="CHEBI:18420"/>
        <label>2</label>
    </ligand>
</feature>
<proteinExistence type="inferred from homology"/>
<evidence type="ECO:0000255" key="1">
    <source>
        <dbReference type="HAMAP-Rule" id="MF_01855"/>
    </source>
</evidence>
<keyword id="KW-0119">Carbohydrate metabolism</keyword>
<keyword id="KW-0963">Cytoplasm</keyword>
<keyword id="KW-0378">Hydrolase</keyword>
<keyword id="KW-0460">Magnesium</keyword>
<keyword id="KW-0479">Metal-binding</keyword>
<reference key="1">
    <citation type="submission" date="2006-12" db="EMBL/GenBank/DDBJ databases">
        <title>Complete sequence of Acidovorax avenae subsp. citrulli AAC00-1.</title>
        <authorList>
            <person name="Copeland A."/>
            <person name="Lucas S."/>
            <person name="Lapidus A."/>
            <person name="Barry K."/>
            <person name="Detter J.C."/>
            <person name="Glavina del Rio T."/>
            <person name="Dalin E."/>
            <person name="Tice H."/>
            <person name="Pitluck S."/>
            <person name="Kiss H."/>
            <person name="Brettin T."/>
            <person name="Bruce D."/>
            <person name="Han C."/>
            <person name="Tapia R."/>
            <person name="Gilna P."/>
            <person name="Schmutz J."/>
            <person name="Larimer F."/>
            <person name="Land M."/>
            <person name="Hauser L."/>
            <person name="Kyrpides N."/>
            <person name="Kim E."/>
            <person name="Stahl D."/>
            <person name="Richardson P."/>
        </authorList>
    </citation>
    <scope>NUCLEOTIDE SEQUENCE [LARGE SCALE GENOMIC DNA]</scope>
    <source>
        <strain>AAC00-1</strain>
    </source>
</reference>
<protein>
    <recommendedName>
        <fullName evidence="1">Fructose-1,6-bisphosphatase class 1</fullName>
        <shortName evidence="1">FBPase class 1</shortName>
        <ecNumber evidence="1">3.1.3.11</ecNumber>
    </recommendedName>
    <alternativeName>
        <fullName evidence="1">D-fructose-1,6-bisphosphate 1-phosphohydrolase class 1</fullName>
    </alternativeName>
</protein>